<feature type="chain" id="PRO_1000069428" description="Putative glutamate--cysteine ligase 2">
    <location>
        <begin position="1"/>
        <end position="371"/>
    </location>
</feature>
<accession>A1V8X0</accession>
<protein>
    <recommendedName>
        <fullName evidence="1">Putative glutamate--cysteine ligase 2</fullName>
        <ecNumber evidence="1">6.3.2.2</ecNumber>
    </recommendedName>
    <alternativeName>
        <fullName evidence="1">Gamma-glutamylcysteine synthetase 2</fullName>
        <shortName evidence="1">GCS 2</shortName>
        <shortName evidence="1">Gamma-GCS 2</shortName>
    </alternativeName>
</protein>
<proteinExistence type="inferred from homology"/>
<dbReference type="EC" id="6.3.2.2" evidence="1"/>
<dbReference type="EMBL" id="CP000526">
    <property type="protein sequence ID" value="ABM51983.1"/>
    <property type="molecule type" value="Genomic_DNA"/>
</dbReference>
<dbReference type="RefSeq" id="WP_004195787.1">
    <property type="nucleotide sequence ID" value="NC_008785.1"/>
</dbReference>
<dbReference type="SMR" id="A1V8X0"/>
<dbReference type="KEGG" id="bmv:BMASAVP1_A3394"/>
<dbReference type="HOGENOM" id="CLU_044848_1_1_4"/>
<dbReference type="GO" id="GO:0005524">
    <property type="term" value="F:ATP binding"/>
    <property type="evidence" value="ECO:0007669"/>
    <property type="project" value="UniProtKB-KW"/>
</dbReference>
<dbReference type="GO" id="GO:0004357">
    <property type="term" value="F:glutamate-cysteine ligase activity"/>
    <property type="evidence" value="ECO:0007669"/>
    <property type="project" value="UniProtKB-EC"/>
</dbReference>
<dbReference type="GO" id="GO:0042398">
    <property type="term" value="P:modified amino acid biosynthetic process"/>
    <property type="evidence" value="ECO:0007669"/>
    <property type="project" value="InterPro"/>
</dbReference>
<dbReference type="Gene3D" id="3.30.590.20">
    <property type="match status" value="1"/>
</dbReference>
<dbReference type="HAMAP" id="MF_01609">
    <property type="entry name" value="Glu_cys_ligase_2"/>
    <property type="match status" value="1"/>
</dbReference>
<dbReference type="InterPro" id="IPR050141">
    <property type="entry name" value="GCL_type2/YbdK_subfam"/>
</dbReference>
<dbReference type="InterPro" id="IPR006336">
    <property type="entry name" value="GCS2"/>
</dbReference>
<dbReference type="InterPro" id="IPR014746">
    <property type="entry name" value="Gln_synth/guanido_kin_cat_dom"/>
</dbReference>
<dbReference type="InterPro" id="IPR011793">
    <property type="entry name" value="YbdK"/>
</dbReference>
<dbReference type="NCBIfam" id="TIGR02050">
    <property type="entry name" value="gshA_cyan_rel"/>
    <property type="match status" value="1"/>
</dbReference>
<dbReference type="NCBIfam" id="NF010040">
    <property type="entry name" value="PRK13516.1"/>
    <property type="match status" value="1"/>
</dbReference>
<dbReference type="PANTHER" id="PTHR36510">
    <property type="entry name" value="GLUTAMATE--CYSTEINE LIGASE 2-RELATED"/>
    <property type="match status" value="1"/>
</dbReference>
<dbReference type="PANTHER" id="PTHR36510:SF1">
    <property type="entry name" value="GLUTAMATE--CYSTEINE LIGASE 2-RELATED"/>
    <property type="match status" value="1"/>
</dbReference>
<dbReference type="Pfam" id="PF04107">
    <property type="entry name" value="GCS2"/>
    <property type="match status" value="1"/>
</dbReference>
<dbReference type="SUPFAM" id="SSF55931">
    <property type="entry name" value="Glutamine synthetase/guanido kinase"/>
    <property type="match status" value="1"/>
</dbReference>
<comment type="function">
    <text evidence="1">ATP-dependent carboxylate-amine ligase which exhibits weak glutamate--cysteine ligase activity.</text>
</comment>
<comment type="catalytic activity">
    <reaction evidence="1">
        <text>L-cysteine + L-glutamate + ATP = gamma-L-glutamyl-L-cysteine + ADP + phosphate + H(+)</text>
        <dbReference type="Rhea" id="RHEA:13285"/>
        <dbReference type="ChEBI" id="CHEBI:15378"/>
        <dbReference type="ChEBI" id="CHEBI:29985"/>
        <dbReference type="ChEBI" id="CHEBI:30616"/>
        <dbReference type="ChEBI" id="CHEBI:35235"/>
        <dbReference type="ChEBI" id="CHEBI:43474"/>
        <dbReference type="ChEBI" id="CHEBI:58173"/>
        <dbReference type="ChEBI" id="CHEBI:456216"/>
        <dbReference type="EC" id="6.3.2.2"/>
    </reaction>
</comment>
<comment type="similarity">
    <text evidence="1">Belongs to the glutamate--cysteine ligase type 2 family. YbdK subfamily.</text>
</comment>
<organism>
    <name type="scientific">Burkholderia mallei (strain SAVP1)</name>
    <dbReference type="NCBI Taxonomy" id="320388"/>
    <lineage>
        <taxon>Bacteria</taxon>
        <taxon>Pseudomonadati</taxon>
        <taxon>Pseudomonadota</taxon>
        <taxon>Betaproteobacteria</taxon>
        <taxon>Burkholderiales</taxon>
        <taxon>Burkholderiaceae</taxon>
        <taxon>Burkholderia</taxon>
        <taxon>pseudomallei group</taxon>
    </lineage>
</organism>
<name>GCS2_BURMS</name>
<sequence length="371" mass="41779">MALETFVNSEPFTFGVELEIQIVNTHNYDLTKAASDLMRLIKDAKFPGNITPEITESMIELSTGICRTHDQALGELHAIRDTLVSAADQLNVGLCGGGTHAFQQWSERQIFDAPRFQYISELYGYLAKQFTVFGQHVHIGCPDADSALFLLHSMSRFIPHFIALSASSPYVQNVDTGFHSARLNSVFAFPLSGRAPFVLTWHGFEEYFTKMVNTGVVNSMKDFYWDIRPKPGYGTIEVRVMDTPLSVDRAAAIACYIQTLARYLLIDRPLKLSEDDYLVYTFNRFEACRFGLEGTCVNPQTGERRTIAEDILDTLDRIAPHAAALGSRAALDEIGALAKARVNDASWLRTIFKQEKSLNETVRQQCLRWRE</sequence>
<keyword id="KW-0067">ATP-binding</keyword>
<keyword id="KW-0436">Ligase</keyword>
<keyword id="KW-0547">Nucleotide-binding</keyword>
<reference key="1">
    <citation type="journal article" date="2010" name="Genome Biol. Evol.">
        <title>Continuing evolution of Burkholderia mallei through genome reduction and large-scale rearrangements.</title>
        <authorList>
            <person name="Losada L."/>
            <person name="Ronning C.M."/>
            <person name="DeShazer D."/>
            <person name="Woods D."/>
            <person name="Fedorova N."/>
            <person name="Kim H.S."/>
            <person name="Shabalina S.A."/>
            <person name="Pearson T.R."/>
            <person name="Brinkac L."/>
            <person name="Tan P."/>
            <person name="Nandi T."/>
            <person name="Crabtree J."/>
            <person name="Badger J."/>
            <person name="Beckstrom-Sternberg S."/>
            <person name="Saqib M."/>
            <person name="Schutzer S.E."/>
            <person name="Keim P."/>
            <person name="Nierman W.C."/>
        </authorList>
    </citation>
    <scope>NUCLEOTIDE SEQUENCE [LARGE SCALE GENOMIC DNA]</scope>
    <source>
        <strain>SAVP1</strain>
    </source>
</reference>
<evidence type="ECO:0000255" key="1">
    <source>
        <dbReference type="HAMAP-Rule" id="MF_01609"/>
    </source>
</evidence>
<gene>
    <name type="ordered locus">BMASAVP1_A3394</name>
</gene>